<keyword id="KW-0067">ATP-binding</keyword>
<keyword id="KW-0235">DNA replication</keyword>
<keyword id="KW-0238">DNA-binding</keyword>
<keyword id="KW-0347">Helicase</keyword>
<keyword id="KW-0378">Hydrolase</keyword>
<keyword id="KW-0413">Isomerase</keyword>
<keyword id="KW-0479">Metal-binding</keyword>
<keyword id="KW-0547">Nucleotide-binding</keyword>
<keyword id="KW-0639">Primosome</keyword>
<keyword id="KW-0862">Zinc</keyword>
<accession>Q8KA15</accession>
<comment type="function">
    <text evidence="1">Initiates the restart of stalled replication forks, which reloads the replicative helicase on sites other than the origin of replication. Recognizes and binds to abandoned replication forks and remodels them to uncover a helicase loading site. Promotes assembly of the primosome at these replication forks.</text>
</comment>
<comment type="catalytic activity">
    <reaction evidence="1">
        <text>Couples ATP hydrolysis with the unwinding of duplex DNA by translocating in the 3'-5' direction.</text>
        <dbReference type="EC" id="5.6.2.4"/>
    </reaction>
</comment>
<comment type="catalytic activity">
    <reaction evidence="1">
        <text>ATP + H2O = ADP + phosphate + H(+)</text>
        <dbReference type="Rhea" id="RHEA:13065"/>
        <dbReference type="ChEBI" id="CHEBI:15377"/>
        <dbReference type="ChEBI" id="CHEBI:15378"/>
        <dbReference type="ChEBI" id="CHEBI:30616"/>
        <dbReference type="ChEBI" id="CHEBI:43474"/>
        <dbReference type="ChEBI" id="CHEBI:456216"/>
        <dbReference type="EC" id="5.6.2.4"/>
    </reaction>
</comment>
<comment type="cofactor">
    <cofactor evidence="1">
        <name>Zn(2+)</name>
        <dbReference type="ChEBI" id="CHEBI:29105"/>
    </cofactor>
    <text evidence="1">Binds 2 zinc ions per subunit.</text>
</comment>
<comment type="subunit">
    <text evidence="1">Component of the replication restart primosome.</text>
</comment>
<comment type="similarity">
    <text evidence="1">Belongs to the helicase family. PriA subfamily.</text>
</comment>
<feature type="chain" id="PRO_0000102119" description="Replication restart protein PriA">
    <location>
        <begin position="1"/>
        <end position="720"/>
    </location>
</feature>
<feature type="domain" description="Helicase ATP-binding" evidence="1">
    <location>
        <begin position="200"/>
        <end position="366"/>
    </location>
</feature>
<feature type="short sequence motif" description="DEAH box" evidence="1">
    <location>
        <begin position="309"/>
        <end position="312"/>
    </location>
</feature>
<feature type="binding site" evidence="1">
    <location>
        <begin position="213"/>
        <end position="220"/>
    </location>
    <ligand>
        <name>ATP</name>
        <dbReference type="ChEBI" id="CHEBI:30616"/>
    </ligand>
</feature>
<feature type="binding site" evidence="1">
    <location>
        <position position="425"/>
    </location>
    <ligand>
        <name>Zn(2+)</name>
        <dbReference type="ChEBI" id="CHEBI:29105"/>
        <label>1</label>
    </ligand>
</feature>
<feature type="binding site" evidence="1">
    <location>
        <position position="428"/>
    </location>
    <ligand>
        <name>Zn(2+)</name>
        <dbReference type="ChEBI" id="CHEBI:29105"/>
        <label>1</label>
    </ligand>
</feature>
<feature type="binding site" evidence="1">
    <location>
        <position position="434"/>
    </location>
    <ligand>
        <name>Zn(2+)</name>
        <dbReference type="ChEBI" id="CHEBI:29105"/>
        <label>2</label>
    </ligand>
</feature>
<feature type="binding site" evidence="1">
    <location>
        <position position="437"/>
    </location>
    <ligand>
        <name>Zn(2+)</name>
        <dbReference type="ChEBI" id="CHEBI:29105"/>
        <label>2</label>
    </ligand>
</feature>
<feature type="binding site" evidence="1">
    <location>
        <position position="452"/>
    </location>
    <ligand>
        <name>Zn(2+)</name>
        <dbReference type="ChEBI" id="CHEBI:29105"/>
        <label>2</label>
    </ligand>
</feature>
<feature type="binding site" evidence="1">
    <location>
        <position position="455"/>
    </location>
    <ligand>
        <name>Zn(2+)</name>
        <dbReference type="ChEBI" id="CHEBI:29105"/>
        <label>2</label>
    </ligand>
</feature>
<feature type="binding site" evidence="1">
    <location>
        <position position="465"/>
    </location>
    <ligand>
        <name>Zn(2+)</name>
        <dbReference type="ChEBI" id="CHEBI:29105"/>
        <label>1</label>
    </ligand>
</feature>
<feature type="binding site" evidence="1">
    <location>
        <position position="468"/>
    </location>
    <ligand>
        <name>Zn(2+)</name>
        <dbReference type="ChEBI" id="CHEBI:29105"/>
        <label>1</label>
    </ligand>
</feature>
<name>PRIA_BUCAP</name>
<dbReference type="EC" id="5.6.2.4" evidence="1"/>
<dbReference type="EMBL" id="AE013218">
    <property type="protein sequence ID" value="AAM67681.1"/>
    <property type="molecule type" value="Genomic_DNA"/>
</dbReference>
<dbReference type="RefSeq" id="WP_011053647.1">
    <property type="nucleotide sequence ID" value="NC_004061.1"/>
</dbReference>
<dbReference type="SMR" id="Q8KA15"/>
<dbReference type="STRING" id="198804.BUsg_112"/>
<dbReference type="GeneID" id="93003582"/>
<dbReference type="KEGG" id="bas:BUsg_112"/>
<dbReference type="eggNOG" id="COG1198">
    <property type="taxonomic scope" value="Bacteria"/>
</dbReference>
<dbReference type="HOGENOM" id="CLU_013353_3_1_6"/>
<dbReference type="Proteomes" id="UP000000416">
    <property type="component" value="Chromosome"/>
</dbReference>
<dbReference type="GO" id="GO:1990077">
    <property type="term" value="C:primosome complex"/>
    <property type="evidence" value="ECO:0007669"/>
    <property type="project" value="UniProtKB-UniRule"/>
</dbReference>
<dbReference type="GO" id="GO:0043138">
    <property type="term" value="F:3'-5' DNA helicase activity"/>
    <property type="evidence" value="ECO:0007669"/>
    <property type="project" value="TreeGrafter"/>
</dbReference>
<dbReference type="GO" id="GO:0005524">
    <property type="term" value="F:ATP binding"/>
    <property type="evidence" value="ECO:0007669"/>
    <property type="project" value="UniProtKB-UniRule"/>
</dbReference>
<dbReference type="GO" id="GO:0016887">
    <property type="term" value="F:ATP hydrolysis activity"/>
    <property type="evidence" value="ECO:0007669"/>
    <property type="project" value="RHEA"/>
</dbReference>
<dbReference type="GO" id="GO:0003677">
    <property type="term" value="F:DNA binding"/>
    <property type="evidence" value="ECO:0007669"/>
    <property type="project" value="UniProtKB-UniRule"/>
</dbReference>
<dbReference type="GO" id="GO:0008270">
    <property type="term" value="F:zinc ion binding"/>
    <property type="evidence" value="ECO:0007669"/>
    <property type="project" value="UniProtKB-UniRule"/>
</dbReference>
<dbReference type="GO" id="GO:0006310">
    <property type="term" value="P:DNA recombination"/>
    <property type="evidence" value="ECO:0007669"/>
    <property type="project" value="InterPro"/>
</dbReference>
<dbReference type="GO" id="GO:0006270">
    <property type="term" value="P:DNA replication initiation"/>
    <property type="evidence" value="ECO:0007669"/>
    <property type="project" value="TreeGrafter"/>
</dbReference>
<dbReference type="GO" id="GO:0006269">
    <property type="term" value="P:DNA replication, synthesis of primer"/>
    <property type="evidence" value="ECO:0007669"/>
    <property type="project" value="UniProtKB-KW"/>
</dbReference>
<dbReference type="GO" id="GO:0006302">
    <property type="term" value="P:double-strand break repair"/>
    <property type="evidence" value="ECO:0007669"/>
    <property type="project" value="InterPro"/>
</dbReference>
<dbReference type="Gene3D" id="3.40.50.300">
    <property type="entry name" value="P-loop containing nucleotide triphosphate hydrolases"/>
    <property type="match status" value="1"/>
</dbReference>
<dbReference type="Gene3D" id="3.40.1440.60">
    <property type="entry name" value="PriA, 3(prime) DNA-binding domain"/>
    <property type="match status" value="1"/>
</dbReference>
<dbReference type="HAMAP" id="MF_00983">
    <property type="entry name" value="PriA"/>
    <property type="match status" value="1"/>
</dbReference>
<dbReference type="InterPro" id="IPR014001">
    <property type="entry name" value="Helicase_ATP-bd"/>
</dbReference>
<dbReference type="InterPro" id="IPR027417">
    <property type="entry name" value="P-loop_NTPase"/>
</dbReference>
<dbReference type="InterPro" id="IPR005259">
    <property type="entry name" value="PriA"/>
</dbReference>
<dbReference type="InterPro" id="IPR041222">
    <property type="entry name" value="PriA_3primeBD"/>
</dbReference>
<dbReference type="InterPro" id="IPR042115">
    <property type="entry name" value="PriA_3primeBD_sf"/>
</dbReference>
<dbReference type="InterPro" id="IPR041236">
    <property type="entry name" value="PriA_C"/>
</dbReference>
<dbReference type="InterPro" id="IPR050880">
    <property type="entry name" value="PriA_helicase"/>
</dbReference>
<dbReference type="NCBIfam" id="TIGR00595">
    <property type="entry name" value="priA"/>
    <property type="match status" value="1"/>
</dbReference>
<dbReference type="PANTHER" id="PTHR30580">
    <property type="entry name" value="PRIMOSOMAL PROTEIN N"/>
    <property type="match status" value="1"/>
</dbReference>
<dbReference type="PANTHER" id="PTHR30580:SF0">
    <property type="entry name" value="PRIMOSOMAL PROTEIN N"/>
    <property type="match status" value="1"/>
</dbReference>
<dbReference type="Pfam" id="PF17764">
    <property type="entry name" value="PriA_3primeBD"/>
    <property type="match status" value="1"/>
</dbReference>
<dbReference type="Pfam" id="PF18074">
    <property type="entry name" value="PriA_C"/>
    <property type="match status" value="1"/>
</dbReference>
<dbReference type="SUPFAM" id="SSF52540">
    <property type="entry name" value="P-loop containing nucleoside triphosphate hydrolases"/>
    <property type="match status" value="1"/>
</dbReference>
<dbReference type="PROSITE" id="PS51192">
    <property type="entry name" value="HELICASE_ATP_BIND_1"/>
    <property type="match status" value="1"/>
</dbReference>
<protein>
    <recommendedName>
        <fullName evidence="1">Replication restart protein PriA</fullName>
    </recommendedName>
    <alternativeName>
        <fullName evidence="1">ATP-dependent DNA helicase PriA</fullName>
        <ecNumber evidence="1">5.6.2.4</ecNumber>
    </alternativeName>
    <alternativeName>
        <fullName evidence="1">DNA 3'-5' helicase PriA</fullName>
    </alternativeName>
</protein>
<reference key="1">
    <citation type="journal article" date="2002" name="Science">
        <title>50 million years of genomic stasis in endosymbiotic bacteria.</title>
        <authorList>
            <person name="Tamas I."/>
            <person name="Klasson L."/>
            <person name="Canbaeck B."/>
            <person name="Naeslund A.K."/>
            <person name="Eriksson A.-S."/>
            <person name="Wernegreen J.J."/>
            <person name="Sandstroem J.P."/>
            <person name="Moran N.A."/>
            <person name="Andersson S.G.E."/>
        </authorList>
    </citation>
    <scope>NUCLEOTIDE SEQUENCE [LARGE SCALE GENOMIC DNA]</scope>
    <source>
        <strain>Sg</strain>
    </source>
</reference>
<sequence length="720" mass="86672">MIIVKVVLPLPIRKYFKYFMPDSMCPIIGGRIVVPFRSKDIVGIVISFCNKKNISNLNLAFVKSCIDTESIYSDVVFSILIWLSRYYYFPIGSIFFSILPKYLKKICLIDNKNYKFAILRKTKYKDFKTFNLLFFCKKKSFIDKDLEKYTFFDFFLKKNFLQKSCKNYFYHENIPHIYQNYLIKKKFFLNKKIIFIINKILMKNCFTSWLITKNNFYLKVKFYLGLIKECLSKNLQILILVPFVKDIYQILFFLKKYFNVYIDIIHSQLNNEDYLKKWIRTKSGKNSIIIGTKNSVFFPFLKLGLIIVNQEHHLNYRNLDQCRYNVRDIAILRAYKQNIPIILDSDTPSLRTLYNILHKKCFYIKFIKNKKTFFLKNNVIDLRKERIKIGLSSTLINEIFNNIQKNYPVLLVLNKFSFVFFGLICRRCGKIEKCHICNDYFETKKYDNFLFCRNCLIKIKKPLFCYNCKNFSLIVFDFGIKKIKNSFKKIFPNINLFFLLSLKKNKTKKLKIQFFKFPISNACIIITTEKISQHYYFPYVRFIALTNVDHYFFSFHFCSIEHFLQFYFNLINLTGENKKLLKIFIQTSYPNNKFLLNLCSSDYFLFCRKILSLRKKYFLPPWNFQVIFYSSSKFFEKSFIFLECIQIILKKQSKRDNVSLWFVGPHPVFSLKDRKKCFYQLLIHSPSRTYLKKILKESINIVQCFSISQNVQWFLDIDIY</sequence>
<organism>
    <name type="scientific">Buchnera aphidicola subsp. Schizaphis graminum (strain Sg)</name>
    <dbReference type="NCBI Taxonomy" id="198804"/>
    <lineage>
        <taxon>Bacteria</taxon>
        <taxon>Pseudomonadati</taxon>
        <taxon>Pseudomonadota</taxon>
        <taxon>Gammaproteobacteria</taxon>
        <taxon>Enterobacterales</taxon>
        <taxon>Erwiniaceae</taxon>
        <taxon>Buchnera</taxon>
    </lineage>
</organism>
<evidence type="ECO:0000255" key="1">
    <source>
        <dbReference type="HAMAP-Rule" id="MF_00983"/>
    </source>
</evidence>
<proteinExistence type="inferred from homology"/>
<gene>
    <name evidence="1" type="primary">priA</name>
    <name type="ordered locus">BUsg_112</name>
</gene>